<name>CH10_HELPY</name>
<organism>
    <name type="scientific">Helicobacter pylori (strain ATCC 700392 / 26695)</name>
    <name type="common">Campylobacter pylori</name>
    <dbReference type="NCBI Taxonomy" id="85962"/>
    <lineage>
        <taxon>Bacteria</taxon>
        <taxon>Pseudomonadati</taxon>
        <taxon>Campylobacterota</taxon>
        <taxon>Epsilonproteobacteria</taxon>
        <taxon>Campylobacterales</taxon>
        <taxon>Helicobacteraceae</taxon>
        <taxon>Helicobacter</taxon>
    </lineage>
</organism>
<keyword id="KW-0143">Chaperone</keyword>
<keyword id="KW-0963">Cytoplasm</keyword>
<keyword id="KW-1185">Reference proteome</keyword>
<keyword id="KW-0346">Stress response</keyword>
<gene>
    <name evidence="1" type="primary">groES</name>
    <name evidence="1" type="synonym">groS</name>
    <name type="synonym">hsp10</name>
    <name type="synonym">hspA</name>
    <name type="synonym">mopB</name>
    <name type="ordered locus">HP_0011</name>
</gene>
<accession>P0A0R3</accession>
<accession>P48225</accession>
<sequence length="118" mass="12991">MKFQPLGERVLVERLEEENKTSSGIIIPDNAKEKPLMGVVKAVSHKISEGCKCVKEGDVIAFGKYKGAEIVLDGTEYMVLELEDILGIVGSGSCCHTGNHDHKHAKEHEACCHDHKKH</sequence>
<comment type="function">
    <text evidence="1">Together with the chaperonin GroEL, plays an essential role in assisting protein folding. The GroEL-GroES system forms a nano-cage that allows encapsulation of the non-native substrate proteins and provides a physical environment optimized to promote and accelerate protein folding. GroES binds to the apical surface of the GroEL ring, thereby capping the opening of the GroEL channel.</text>
</comment>
<comment type="subunit">
    <text evidence="1">Heptamer of 7 subunits arranged in a ring. Interacts with the chaperonin GroEL.</text>
</comment>
<comment type="interaction">
    <interactant intactId="EBI-7508075">
        <id>P0A0R3</id>
    </interactant>
    <interactant intactId="EBI-7508075">
        <id>P0A0R3</id>
        <label>groES</label>
    </interactant>
    <organismsDiffer>false</organismsDiffer>
    <experiments>3</experiments>
</comment>
<comment type="subcellular location">
    <subcellularLocation>
        <location evidence="1">Cytoplasm</location>
    </subcellularLocation>
</comment>
<comment type="similarity">
    <text evidence="1 2">Belongs to the GroES chaperonin family.</text>
</comment>
<reference key="1">
    <citation type="journal article" date="1994" name="Mol. Microbiol.">
        <title>Helicobacter pylori hspA-hspB heat-shock gene cluster: nucleotide sequence, expression, putative function and immunogenicity.</title>
        <authorList>
            <person name="Suerbaum S."/>
            <person name="Thiberge J.-M."/>
            <person name="Kansau I."/>
            <person name="Ferrero R.L."/>
            <person name="Labigne A."/>
        </authorList>
    </citation>
    <scope>NUCLEOTIDE SEQUENCE [GENOMIC DNA]</scope>
    <source>
        <strain>85P</strain>
    </source>
</reference>
<reference key="2">
    <citation type="journal article" date="1997" name="Nature">
        <title>The complete genome sequence of the gastric pathogen Helicobacter pylori.</title>
        <authorList>
            <person name="Tomb J.-F."/>
            <person name="White O."/>
            <person name="Kerlavage A.R."/>
            <person name="Clayton R.A."/>
            <person name="Sutton G.G."/>
            <person name="Fleischmann R.D."/>
            <person name="Ketchum K.A."/>
            <person name="Klenk H.-P."/>
            <person name="Gill S.R."/>
            <person name="Dougherty B.A."/>
            <person name="Nelson K.E."/>
            <person name="Quackenbush J."/>
            <person name="Zhou L."/>
            <person name="Kirkness E.F."/>
            <person name="Peterson S.N."/>
            <person name="Loftus B.J."/>
            <person name="Richardson D.L."/>
            <person name="Dodson R.J."/>
            <person name="Khalak H.G."/>
            <person name="Glodek A."/>
            <person name="McKenney K."/>
            <person name="FitzGerald L.M."/>
            <person name="Lee N."/>
            <person name="Adams M.D."/>
            <person name="Hickey E.K."/>
            <person name="Berg D.E."/>
            <person name="Gocayne J.D."/>
            <person name="Utterback T.R."/>
            <person name="Peterson J.D."/>
            <person name="Kelley J.M."/>
            <person name="Cotton M.D."/>
            <person name="Weidman J.F."/>
            <person name="Fujii C."/>
            <person name="Bowman C."/>
            <person name="Watthey L."/>
            <person name="Wallin E."/>
            <person name="Hayes W.S."/>
            <person name="Borodovsky M."/>
            <person name="Karp P.D."/>
            <person name="Smith H.O."/>
            <person name="Fraser C.M."/>
            <person name="Venter J.C."/>
        </authorList>
    </citation>
    <scope>NUCLEOTIDE SEQUENCE [LARGE SCALE GENOMIC DNA]</scope>
    <source>
        <strain>ATCC 700392 / 26695</strain>
    </source>
</reference>
<protein>
    <recommendedName>
        <fullName evidence="1">Co-chaperonin GroES</fullName>
    </recommendedName>
    <alternativeName>
        <fullName evidence="1">10 kDa chaperonin</fullName>
    </alternativeName>
    <alternativeName>
        <fullName evidence="1">Chaperonin-10</fullName>
        <shortName evidence="1">Cpn10</shortName>
    </alternativeName>
</protein>
<proteinExistence type="evidence at protein level"/>
<evidence type="ECO:0000255" key="1">
    <source>
        <dbReference type="HAMAP-Rule" id="MF_00580"/>
    </source>
</evidence>
<evidence type="ECO:0000305" key="2"/>
<feature type="chain" id="PRO_0000174764" description="Co-chaperonin GroES">
    <location>
        <begin position="1"/>
        <end position="118"/>
    </location>
</feature>
<feature type="sequence variant" description="In strain: 85P.">
    <original>T</original>
    <variation>V</variation>
    <location>
        <position position="75"/>
    </location>
</feature>
<dbReference type="EMBL" id="L23798">
    <property type="protein sequence ID" value="AAC41440.1"/>
    <property type="molecule type" value="Genomic_DNA"/>
</dbReference>
<dbReference type="EMBL" id="AE000511">
    <property type="protein sequence ID" value="AAD07081.1"/>
    <property type="molecule type" value="Genomic_DNA"/>
</dbReference>
<dbReference type="PIR" id="S61396">
    <property type="entry name" value="S61396"/>
</dbReference>
<dbReference type="RefSeq" id="NP_206813.1">
    <property type="nucleotide sequence ID" value="NC_000915.1"/>
</dbReference>
<dbReference type="RefSeq" id="WP_000671934.1">
    <property type="nucleotide sequence ID" value="NC_018939.1"/>
</dbReference>
<dbReference type="SMR" id="P0A0R3"/>
<dbReference type="FunCoup" id="P0A0R3">
    <property type="interactions" value="377"/>
</dbReference>
<dbReference type="IntAct" id="P0A0R3">
    <property type="interactions" value="4"/>
</dbReference>
<dbReference type="MINT" id="P0A0R3"/>
<dbReference type="STRING" id="85962.HP_0011"/>
<dbReference type="PaxDb" id="85962-C694_00050"/>
<dbReference type="EnsemblBacteria" id="AAD07081">
    <property type="protein sequence ID" value="AAD07081"/>
    <property type="gene ID" value="HP_0011"/>
</dbReference>
<dbReference type="KEGG" id="heo:C694_00050"/>
<dbReference type="KEGG" id="hpy:HP_0011"/>
<dbReference type="PATRIC" id="fig|85962.47.peg.10"/>
<dbReference type="eggNOG" id="COG0234">
    <property type="taxonomic scope" value="Bacteria"/>
</dbReference>
<dbReference type="InParanoid" id="P0A0R3"/>
<dbReference type="OrthoDB" id="9806791at2"/>
<dbReference type="PhylomeDB" id="P0A0R3"/>
<dbReference type="Proteomes" id="UP000000429">
    <property type="component" value="Chromosome"/>
</dbReference>
<dbReference type="GO" id="GO:0005737">
    <property type="term" value="C:cytoplasm"/>
    <property type="evidence" value="ECO:0007669"/>
    <property type="project" value="UniProtKB-SubCell"/>
</dbReference>
<dbReference type="GO" id="GO:0005524">
    <property type="term" value="F:ATP binding"/>
    <property type="evidence" value="ECO:0007669"/>
    <property type="project" value="InterPro"/>
</dbReference>
<dbReference type="GO" id="GO:0042802">
    <property type="term" value="F:identical protein binding"/>
    <property type="evidence" value="ECO:0000353"/>
    <property type="project" value="IntAct"/>
</dbReference>
<dbReference type="GO" id="GO:0046872">
    <property type="term" value="F:metal ion binding"/>
    <property type="evidence" value="ECO:0000318"/>
    <property type="project" value="GO_Central"/>
</dbReference>
<dbReference type="GO" id="GO:0044183">
    <property type="term" value="F:protein folding chaperone"/>
    <property type="evidence" value="ECO:0007669"/>
    <property type="project" value="InterPro"/>
</dbReference>
<dbReference type="GO" id="GO:0051087">
    <property type="term" value="F:protein-folding chaperone binding"/>
    <property type="evidence" value="ECO:0000318"/>
    <property type="project" value="GO_Central"/>
</dbReference>
<dbReference type="GO" id="GO:0051082">
    <property type="term" value="F:unfolded protein binding"/>
    <property type="evidence" value="ECO:0000318"/>
    <property type="project" value="GO_Central"/>
</dbReference>
<dbReference type="GO" id="GO:0051085">
    <property type="term" value="P:chaperone cofactor-dependent protein refolding"/>
    <property type="evidence" value="ECO:0000318"/>
    <property type="project" value="GO_Central"/>
</dbReference>
<dbReference type="CDD" id="cd00320">
    <property type="entry name" value="cpn10"/>
    <property type="match status" value="1"/>
</dbReference>
<dbReference type="FunFam" id="2.30.33.40:FF:000009">
    <property type="entry name" value="10 kDa chaperonin"/>
    <property type="match status" value="1"/>
</dbReference>
<dbReference type="Gene3D" id="2.30.33.40">
    <property type="entry name" value="GroES chaperonin"/>
    <property type="match status" value="1"/>
</dbReference>
<dbReference type="HAMAP" id="MF_00580">
    <property type="entry name" value="CH10"/>
    <property type="match status" value="1"/>
</dbReference>
<dbReference type="InterPro" id="IPR020818">
    <property type="entry name" value="Chaperonin_GroES"/>
</dbReference>
<dbReference type="InterPro" id="IPR037124">
    <property type="entry name" value="Chaperonin_GroES_sf"/>
</dbReference>
<dbReference type="InterPro" id="IPR018369">
    <property type="entry name" value="Chaprnonin_Cpn10_CS"/>
</dbReference>
<dbReference type="InterPro" id="IPR011032">
    <property type="entry name" value="GroES-like_sf"/>
</dbReference>
<dbReference type="NCBIfam" id="NF001535">
    <property type="entry name" value="PRK00364.3-1"/>
    <property type="match status" value="1"/>
</dbReference>
<dbReference type="NCBIfam" id="NF001537">
    <property type="entry name" value="PRK00364.3-3"/>
    <property type="match status" value="1"/>
</dbReference>
<dbReference type="PANTHER" id="PTHR10772">
    <property type="entry name" value="10 KDA HEAT SHOCK PROTEIN"/>
    <property type="match status" value="1"/>
</dbReference>
<dbReference type="PANTHER" id="PTHR10772:SF58">
    <property type="entry name" value="CO-CHAPERONIN GROES"/>
    <property type="match status" value="1"/>
</dbReference>
<dbReference type="Pfam" id="PF00166">
    <property type="entry name" value="Cpn10"/>
    <property type="match status" value="1"/>
</dbReference>
<dbReference type="PRINTS" id="PR00297">
    <property type="entry name" value="CHAPERONIN10"/>
</dbReference>
<dbReference type="SMART" id="SM00883">
    <property type="entry name" value="Cpn10"/>
    <property type="match status" value="1"/>
</dbReference>
<dbReference type="SUPFAM" id="SSF50129">
    <property type="entry name" value="GroES-like"/>
    <property type="match status" value="1"/>
</dbReference>
<dbReference type="PROSITE" id="PS00681">
    <property type="entry name" value="CHAPERONINS_CPN10"/>
    <property type="match status" value="1"/>
</dbReference>